<comment type="function">
    <text>SASP are proteins degraded in the first minutes of spore germination and provide amino acids for both new protein synthesis and metabolism. These proteins may be involved in dormant spore's high resistance to UV light.</text>
</comment>
<comment type="similarity">
    <text evidence="2">Belongs to the gamma-type SASP family.</text>
</comment>
<reference key="1">
    <citation type="journal article" date="1987" name="J. Bacteriol.">
        <title>Cloning and nucleotide sequencing of genes for a second type of small, acid-soluble spore proteins of Bacillus cereus, Bacillus stearothermophilus, and 'Thermoactinomyces thalpophilus'.</title>
        <authorList>
            <person name="Sun D."/>
            <person name="Setlow P."/>
        </authorList>
    </citation>
    <scope>NUCLEOTIDE SEQUENCE [GENOMIC DNA]</scope>
</reference>
<name>SSPE_GEOSE</name>
<evidence type="ECO:0000256" key="1">
    <source>
        <dbReference type="SAM" id="MobiDB-lite"/>
    </source>
</evidence>
<evidence type="ECO:0000305" key="2"/>
<organism>
    <name type="scientific">Geobacillus stearothermophilus</name>
    <name type="common">Bacillus stearothermophilus</name>
    <dbReference type="NCBI Taxonomy" id="1422"/>
    <lineage>
        <taxon>Bacteria</taxon>
        <taxon>Bacillati</taxon>
        <taxon>Bacillota</taxon>
        <taxon>Bacilli</taxon>
        <taxon>Bacillales</taxon>
        <taxon>Anoxybacillaceae</taxon>
        <taxon>Geobacillus</taxon>
    </lineage>
</organism>
<dbReference type="EMBL" id="M16814">
    <property type="protein sequence ID" value="AAA22741.1"/>
    <property type="molecule type" value="Genomic_DNA"/>
</dbReference>
<dbReference type="PIR" id="B27086">
    <property type="entry name" value="B27086"/>
</dbReference>
<dbReference type="GO" id="GO:0030435">
    <property type="term" value="P:sporulation resulting in formation of a cellular spore"/>
    <property type="evidence" value="ECO:0007669"/>
    <property type="project" value="UniProtKB-KW"/>
</dbReference>
<dbReference type="InterPro" id="IPR006341">
    <property type="entry name" value="Spore_gamma"/>
</dbReference>
<dbReference type="NCBIfam" id="TIGR01442">
    <property type="entry name" value="SASP_gamma"/>
    <property type="match status" value="1"/>
</dbReference>
<dbReference type="Pfam" id="PF04259">
    <property type="entry name" value="SASP_gamma"/>
    <property type="match status" value="1"/>
</dbReference>
<gene>
    <name type="primary">sspE</name>
</gene>
<proteinExistence type="inferred from homology"/>
<protein>
    <recommendedName>
        <fullName>Small, acid-soluble spore protein gamma-type</fullName>
        <shortName>SASP</shortName>
    </recommendedName>
</protein>
<keyword id="KW-0677">Repeat</keyword>
<keyword id="KW-0749">Sporulation</keyword>
<feature type="chain" id="PRO_0000196324" description="Small, acid-soluble spore protein gamma-type">
    <location>
        <begin position="1"/>
        <end position="82"/>
    </location>
</feature>
<feature type="repeat">
    <location>
        <begin position="19"/>
        <end position="45"/>
    </location>
</feature>
<feature type="repeat">
    <location>
        <begin position="46"/>
        <end position="72"/>
    </location>
</feature>
<feature type="region of interest" description="Disordered" evidence="1">
    <location>
        <begin position="1"/>
        <end position="82"/>
    </location>
</feature>
<feature type="compositionally biased region" description="Polar residues" evidence="1">
    <location>
        <begin position="1"/>
        <end position="24"/>
    </location>
</feature>
<feature type="compositionally biased region" description="Polar residues" evidence="1">
    <location>
        <begin position="32"/>
        <end position="50"/>
    </location>
</feature>
<feature type="compositionally biased region" description="Low complexity" evidence="1">
    <location>
        <begin position="69"/>
        <end position="82"/>
    </location>
</feature>
<feature type="site" description="Cleavage; by spore protease">
    <location>
        <begin position="30"/>
        <end position="31"/>
    </location>
</feature>
<feature type="site" description="Cleavage; by spore protease">
    <location>
        <begin position="57"/>
        <end position="58"/>
    </location>
</feature>
<accession>P07785</accession>
<sequence length="82" mass="9020">MANSNNKTNAQQVRKQNQQSASGQGQFGTEFASETNVQQVRKQNQQSAAGQGQFGTEFASETDAQQVRQQNQSAEQNKQQNS</sequence>